<dbReference type="EC" id="2.1.3.15" evidence="1"/>
<dbReference type="EMBL" id="AE013598">
    <property type="protein sequence ID" value="AAW75215.1"/>
    <property type="molecule type" value="Genomic_DNA"/>
</dbReference>
<dbReference type="SMR" id="Q5H1F6"/>
<dbReference type="STRING" id="291331.XOO1961"/>
<dbReference type="KEGG" id="xoo:XOO1961"/>
<dbReference type="HOGENOM" id="CLU_015486_0_2_6"/>
<dbReference type="UniPathway" id="UPA00655">
    <property type="reaction ID" value="UER00711"/>
</dbReference>
<dbReference type="Proteomes" id="UP000006735">
    <property type="component" value="Chromosome"/>
</dbReference>
<dbReference type="GO" id="GO:0009317">
    <property type="term" value="C:acetyl-CoA carboxylase complex"/>
    <property type="evidence" value="ECO:0007669"/>
    <property type="project" value="InterPro"/>
</dbReference>
<dbReference type="GO" id="GO:0003989">
    <property type="term" value="F:acetyl-CoA carboxylase activity"/>
    <property type="evidence" value="ECO:0007669"/>
    <property type="project" value="InterPro"/>
</dbReference>
<dbReference type="GO" id="GO:0005524">
    <property type="term" value="F:ATP binding"/>
    <property type="evidence" value="ECO:0007669"/>
    <property type="project" value="UniProtKB-KW"/>
</dbReference>
<dbReference type="GO" id="GO:0016743">
    <property type="term" value="F:carboxyl- or carbamoyltransferase activity"/>
    <property type="evidence" value="ECO:0007669"/>
    <property type="project" value="UniProtKB-UniRule"/>
</dbReference>
<dbReference type="GO" id="GO:0006633">
    <property type="term" value="P:fatty acid biosynthetic process"/>
    <property type="evidence" value="ECO:0007669"/>
    <property type="project" value="UniProtKB-KW"/>
</dbReference>
<dbReference type="GO" id="GO:2001295">
    <property type="term" value="P:malonyl-CoA biosynthetic process"/>
    <property type="evidence" value="ECO:0007669"/>
    <property type="project" value="UniProtKB-UniRule"/>
</dbReference>
<dbReference type="FunFam" id="3.90.226.10:FF:000008">
    <property type="entry name" value="Acetyl-coenzyme A carboxylase carboxyl transferase subunit alpha"/>
    <property type="match status" value="1"/>
</dbReference>
<dbReference type="Gene3D" id="3.90.226.10">
    <property type="entry name" value="2-enoyl-CoA Hydratase, Chain A, domain 1"/>
    <property type="match status" value="1"/>
</dbReference>
<dbReference type="HAMAP" id="MF_00823">
    <property type="entry name" value="AcetylCoA_CT_alpha"/>
    <property type="match status" value="1"/>
</dbReference>
<dbReference type="InterPro" id="IPR001095">
    <property type="entry name" value="Acetyl_CoA_COase_a_su"/>
</dbReference>
<dbReference type="InterPro" id="IPR029045">
    <property type="entry name" value="ClpP/crotonase-like_dom_sf"/>
</dbReference>
<dbReference type="InterPro" id="IPR011763">
    <property type="entry name" value="COA_CT_C"/>
</dbReference>
<dbReference type="NCBIfam" id="TIGR00513">
    <property type="entry name" value="accA"/>
    <property type="match status" value="1"/>
</dbReference>
<dbReference type="NCBIfam" id="NF041504">
    <property type="entry name" value="AccA_sub"/>
    <property type="match status" value="1"/>
</dbReference>
<dbReference type="NCBIfam" id="NF004344">
    <property type="entry name" value="PRK05724.1"/>
    <property type="match status" value="1"/>
</dbReference>
<dbReference type="PANTHER" id="PTHR42853">
    <property type="entry name" value="ACETYL-COENZYME A CARBOXYLASE CARBOXYL TRANSFERASE SUBUNIT ALPHA"/>
    <property type="match status" value="1"/>
</dbReference>
<dbReference type="PANTHER" id="PTHR42853:SF3">
    <property type="entry name" value="ACETYL-COENZYME A CARBOXYLASE CARBOXYL TRANSFERASE SUBUNIT ALPHA, CHLOROPLASTIC"/>
    <property type="match status" value="1"/>
</dbReference>
<dbReference type="Pfam" id="PF03255">
    <property type="entry name" value="ACCA"/>
    <property type="match status" value="1"/>
</dbReference>
<dbReference type="PRINTS" id="PR01069">
    <property type="entry name" value="ACCCTRFRASEA"/>
</dbReference>
<dbReference type="SUPFAM" id="SSF52096">
    <property type="entry name" value="ClpP/crotonase"/>
    <property type="match status" value="1"/>
</dbReference>
<dbReference type="PROSITE" id="PS50989">
    <property type="entry name" value="COA_CT_CTER"/>
    <property type="match status" value="1"/>
</dbReference>
<gene>
    <name evidence="1" type="primary">accA</name>
    <name type="ordered locus">XOO1961</name>
</gene>
<protein>
    <recommendedName>
        <fullName evidence="1">Acetyl-coenzyme A carboxylase carboxyl transferase subunit alpha</fullName>
        <shortName evidence="1">ACCase subunit alpha</shortName>
        <shortName evidence="1">Acetyl-CoA carboxylase carboxyltransferase subunit alpha</shortName>
        <ecNumber evidence="1">2.1.3.15</ecNumber>
    </recommendedName>
</protein>
<reference key="1">
    <citation type="journal article" date="2005" name="Nucleic Acids Res.">
        <title>The genome sequence of Xanthomonas oryzae pathovar oryzae KACC10331, the bacterial blight pathogen of rice.</title>
        <authorList>
            <person name="Lee B.-M."/>
            <person name="Park Y.-J."/>
            <person name="Park D.-S."/>
            <person name="Kang H.-W."/>
            <person name="Kim J.-G."/>
            <person name="Song E.-S."/>
            <person name="Park I.-C."/>
            <person name="Yoon U.-H."/>
            <person name="Hahn J.-H."/>
            <person name="Koo B.-S."/>
            <person name="Lee G.-B."/>
            <person name="Kim H."/>
            <person name="Park H.-S."/>
            <person name="Yoon K.-O."/>
            <person name="Kim J.-H."/>
            <person name="Jung C.-H."/>
            <person name="Koh N.-H."/>
            <person name="Seo J.-S."/>
            <person name="Go S.-J."/>
        </authorList>
    </citation>
    <scope>NUCLEOTIDE SEQUENCE [LARGE SCALE GENOMIC DNA]</scope>
    <source>
        <strain>KACC10331 / KXO85</strain>
    </source>
</reference>
<proteinExistence type="inferred from homology"/>
<organism>
    <name type="scientific">Xanthomonas oryzae pv. oryzae (strain KACC10331 / KXO85)</name>
    <dbReference type="NCBI Taxonomy" id="291331"/>
    <lineage>
        <taxon>Bacteria</taxon>
        <taxon>Pseudomonadati</taxon>
        <taxon>Pseudomonadota</taxon>
        <taxon>Gammaproteobacteria</taxon>
        <taxon>Lysobacterales</taxon>
        <taxon>Lysobacteraceae</taxon>
        <taxon>Xanthomonas</taxon>
    </lineage>
</organism>
<feature type="chain" id="PRO_0000223858" description="Acetyl-coenzyme A carboxylase carboxyl transferase subunit alpha">
    <location>
        <begin position="1"/>
        <end position="319"/>
    </location>
</feature>
<feature type="domain" description="CoA carboxyltransferase C-terminal" evidence="2">
    <location>
        <begin position="32"/>
        <end position="293"/>
    </location>
</feature>
<keyword id="KW-0067">ATP-binding</keyword>
<keyword id="KW-0963">Cytoplasm</keyword>
<keyword id="KW-0275">Fatty acid biosynthesis</keyword>
<keyword id="KW-0276">Fatty acid metabolism</keyword>
<keyword id="KW-0444">Lipid biosynthesis</keyword>
<keyword id="KW-0443">Lipid metabolism</keyword>
<keyword id="KW-0547">Nucleotide-binding</keyword>
<keyword id="KW-1185">Reference proteome</keyword>
<keyword id="KW-0808">Transferase</keyword>
<accession>Q5H1F6</accession>
<name>ACCA_XANOR</name>
<sequence>MNPNYLDFEQPIADLEAKIQELRKASTGPAVNVETEVRALRDKLRVRTAQIFRDLSAWQVSQLARHPQRPYTLDYINTICDEFQELAGDRAYADDKAIVGGLGRIDGRPVVIIGHQKGRDTKTKVARNFGMPRPEGYRKALRLMKLAERFRLPLLTFIDTPGAYPGIGAEERGQSEAIARNLLEMAELKIPVICTVIGEGGSGGALAIGVGDRTLMLEYGTYSVISPEGCASILWKDAGKAKDAAEQLGLTARRLKDLSLVDKVIREPTGGAHRNPQQMGKRLKAVLLNELDALEKVPLETLLQQRYERLRSYGAYEGR</sequence>
<comment type="function">
    <text evidence="1">Component of the acetyl coenzyme A carboxylase (ACC) complex. First, biotin carboxylase catalyzes the carboxylation of biotin on its carrier protein (BCCP) and then the CO(2) group is transferred by the carboxyltransferase to acetyl-CoA to form malonyl-CoA.</text>
</comment>
<comment type="catalytic activity">
    <reaction evidence="1">
        <text>N(6)-carboxybiotinyl-L-lysyl-[protein] + acetyl-CoA = N(6)-biotinyl-L-lysyl-[protein] + malonyl-CoA</text>
        <dbReference type="Rhea" id="RHEA:54728"/>
        <dbReference type="Rhea" id="RHEA-COMP:10505"/>
        <dbReference type="Rhea" id="RHEA-COMP:10506"/>
        <dbReference type="ChEBI" id="CHEBI:57288"/>
        <dbReference type="ChEBI" id="CHEBI:57384"/>
        <dbReference type="ChEBI" id="CHEBI:83144"/>
        <dbReference type="ChEBI" id="CHEBI:83145"/>
        <dbReference type="EC" id="2.1.3.15"/>
    </reaction>
</comment>
<comment type="pathway">
    <text evidence="1">Lipid metabolism; malonyl-CoA biosynthesis; malonyl-CoA from acetyl-CoA: step 1/1.</text>
</comment>
<comment type="subunit">
    <text evidence="1">Acetyl-CoA carboxylase is a heterohexamer composed of biotin carboxyl carrier protein (AccB), biotin carboxylase (AccC) and two subunits each of ACCase subunit alpha (AccA) and ACCase subunit beta (AccD).</text>
</comment>
<comment type="subcellular location">
    <subcellularLocation>
        <location evidence="1">Cytoplasm</location>
    </subcellularLocation>
</comment>
<comment type="similarity">
    <text evidence="1">Belongs to the AccA family.</text>
</comment>
<evidence type="ECO:0000255" key="1">
    <source>
        <dbReference type="HAMAP-Rule" id="MF_00823"/>
    </source>
</evidence>
<evidence type="ECO:0000255" key="2">
    <source>
        <dbReference type="PROSITE-ProRule" id="PRU01137"/>
    </source>
</evidence>